<accession>B2FKJ1</accession>
<organism>
    <name type="scientific">Stenotrophomonas maltophilia (strain K279a)</name>
    <dbReference type="NCBI Taxonomy" id="522373"/>
    <lineage>
        <taxon>Bacteria</taxon>
        <taxon>Pseudomonadati</taxon>
        <taxon>Pseudomonadota</taxon>
        <taxon>Gammaproteobacteria</taxon>
        <taxon>Lysobacterales</taxon>
        <taxon>Lysobacteraceae</taxon>
        <taxon>Stenotrophomonas</taxon>
        <taxon>Stenotrophomonas maltophilia group</taxon>
    </lineage>
</organism>
<sequence length="821" mass="88822">MSPSPAERAEDLRRQIAQANRAYHELDAPEIPDVDYDRMVRELEALEREHPELARADSPTQQVGARPSGRFPEVRHAVPMLSLSNAFSDEEVADFVRRIDERLGRRSLRFSAEPKMDGLAISLRYEDGHFVLGATRGDGSTGEDVTANLREIGDIPKRLHGKDWPDVLEVRGEVYMARADFEAYNERARLQGGKVLANPRNAAAGSLRQLDPKISAQRRLSFFAYGTGEVQGGELPDTHSGTLAQLGAWGFPVSELCKVVEGTDGLLGYYRTIGERRDGLPFDIDGVVYKLDDRAGQQAMGFVSRAPRWAIAHKFPAQEQSTTVEAIEIQIGRTGAATPVARLAPVAVAGVIVSNATLHNADQIARLDVRVGDSVIVRRAGDVIPEVVSVILDRRPQGTTPWQMPTRCPVCGSEIVREEGAAAWRCSGELSCPAQRKEAIAHFASRRAMDIDGLGDKYIETLVDAGIVKSVADLYRLSRDTLLHLKLVLDAEEPSALAAALKLHLPAEGSGAVLNAVLKLDGNDPGWRAQALAQPASFEWNTKKIATKWADNLIAAIDASRAATLERVLFALGIEHVGESTAKALAQWFGDLELIRHLPWPLFKRVPDIGGEVARSLGHFFEQQGNQQAIDDLLQVGQVRIADVHAPSAKLREGLDLAQLLVESEIPGITRLRAEKLVAALPGAQAVLDAEHGQFVNAGLPDDTARGLAEWLDADGHGAMLLAAENAMREILAKAPALAEIVAGPLDGQTVVLTGTLAQLTRDAAKERLEALGAKVSGSVSKKTSFVVAGTEAGSKLDKAQSLGVSVWDEDRLLAYLAEHE</sequence>
<name>DNLJ_STRMK</name>
<proteinExistence type="inferred from homology"/>
<keyword id="KW-0227">DNA damage</keyword>
<keyword id="KW-0234">DNA repair</keyword>
<keyword id="KW-0235">DNA replication</keyword>
<keyword id="KW-0436">Ligase</keyword>
<keyword id="KW-0460">Magnesium</keyword>
<keyword id="KW-0464">Manganese</keyword>
<keyword id="KW-0479">Metal-binding</keyword>
<keyword id="KW-0520">NAD</keyword>
<keyword id="KW-1185">Reference proteome</keyword>
<keyword id="KW-0862">Zinc</keyword>
<evidence type="ECO:0000255" key="1">
    <source>
        <dbReference type="HAMAP-Rule" id="MF_01588"/>
    </source>
</evidence>
<dbReference type="EC" id="6.5.1.2" evidence="1"/>
<dbReference type="EMBL" id="AM743169">
    <property type="protein sequence ID" value="CAQ46587.1"/>
    <property type="molecule type" value="Genomic_DNA"/>
</dbReference>
<dbReference type="SMR" id="B2FKJ1"/>
<dbReference type="EnsemblBacteria" id="CAQ46587">
    <property type="protein sequence ID" value="CAQ46587"/>
    <property type="gene ID" value="Smlt3142"/>
</dbReference>
<dbReference type="KEGG" id="sml:Smlt3142"/>
<dbReference type="PATRIC" id="fig|522373.3.peg.2939"/>
<dbReference type="eggNOG" id="COG0272">
    <property type="taxonomic scope" value="Bacteria"/>
</dbReference>
<dbReference type="HOGENOM" id="CLU_007764_2_1_6"/>
<dbReference type="Proteomes" id="UP000008840">
    <property type="component" value="Chromosome"/>
</dbReference>
<dbReference type="GO" id="GO:0005829">
    <property type="term" value="C:cytosol"/>
    <property type="evidence" value="ECO:0007669"/>
    <property type="project" value="TreeGrafter"/>
</dbReference>
<dbReference type="GO" id="GO:0003911">
    <property type="term" value="F:DNA ligase (NAD+) activity"/>
    <property type="evidence" value="ECO:0007669"/>
    <property type="project" value="UniProtKB-UniRule"/>
</dbReference>
<dbReference type="GO" id="GO:0046872">
    <property type="term" value="F:metal ion binding"/>
    <property type="evidence" value="ECO:0007669"/>
    <property type="project" value="UniProtKB-KW"/>
</dbReference>
<dbReference type="GO" id="GO:0006281">
    <property type="term" value="P:DNA repair"/>
    <property type="evidence" value="ECO:0007669"/>
    <property type="project" value="UniProtKB-KW"/>
</dbReference>
<dbReference type="GO" id="GO:0006260">
    <property type="term" value="P:DNA replication"/>
    <property type="evidence" value="ECO:0007669"/>
    <property type="project" value="UniProtKB-KW"/>
</dbReference>
<dbReference type="CDD" id="cd17748">
    <property type="entry name" value="BRCT_DNA_ligase_like"/>
    <property type="match status" value="1"/>
</dbReference>
<dbReference type="CDD" id="cd00114">
    <property type="entry name" value="LIGANc"/>
    <property type="match status" value="1"/>
</dbReference>
<dbReference type="FunFam" id="1.10.150.20:FF:000006">
    <property type="entry name" value="DNA ligase"/>
    <property type="match status" value="1"/>
</dbReference>
<dbReference type="FunFam" id="1.10.150.20:FF:000007">
    <property type="entry name" value="DNA ligase"/>
    <property type="match status" value="1"/>
</dbReference>
<dbReference type="FunFam" id="2.40.50.140:FF:000012">
    <property type="entry name" value="DNA ligase"/>
    <property type="match status" value="1"/>
</dbReference>
<dbReference type="FunFam" id="3.30.470.30:FF:000001">
    <property type="entry name" value="DNA ligase"/>
    <property type="match status" value="1"/>
</dbReference>
<dbReference type="FunFam" id="3.40.50.10190:FF:000054">
    <property type="entry name" value="DNA ligase"/>
    <property type="match status" value="1"/>
</dbReference>
<dbReference type="Gene3D" id="6.20.10.30">
    <property type="match status" value="1"/>
</dbReference>
<dbReference type="Gene3D" id="1.10.150.20">
    <property type="entry name" value="5' to 3' exonuclease, C-terminal subdomain"/>
    <property type="match status" value="2"/>
</dbReference>
<dbReference type="Gene3D" id="3.40.50.10190">
    <property type="entry name" value="BRCT domain"/>
    <property type="match status" value="1"/>
</dbReference>
<dbReference type="Gene3D" id="3.30.470.30">
    <property type="entry name" value="DNA ligase/mRNA capping enzyme"/>
    <property type="match status" value="1"/>
</dbReference>
<dbReference type="Gene3D" id="1.10.287.610">
    <property type="entry name" value="Helix hairpin bin"/>
    <property type="match status" value="1"/>
</dbReference>
<dbReference type="Gene3D" id="2.40.50.140">
    <property type="entry name" value="Nucleic acid-binding proteins"/>
    <property type="match status" value="1"/>
</dbReference>
<dbReference type="HAMAP" id="MF_01588">
    <property type="entry name" value="DNA_ligase_A"/>
    <property type="match status" value="1"/>
</dbReference>
<dbReference type="InterPro" id="IPR001357">
    <property type="entry name" value="BRCT_dom"/>
</dbReference>
<dbReference type="InterPro" id="IPR036420">
    <property type="entry name" value="BRCT_dom_sf"/>
</dbReference>
<dbReference type="InterPro" id="IPR041663">
    <property type="entry name" value="DisA/LigA_HHH"/>
</dbReference>
<dbReference type="InterPro" id="IPR001679">
    <property type="entry name" value="DNA_ligase"/>
</dbReference>
<dbReference type="InterPro" id="IPR018239">
    <property type="entry name" value="DNA_ligase_AS"/>
</dbReference>
<dbReference type="InterPro" id="IPR013839">
    <property type="entry name" value="DNAligase_adenylation"/>
</dbReference>
<dbReference type="InterPro" id="IPR013840">
    <property type="entry name" value="DNAligase_N"/>
</dbReference>
<dbReference type="InterPro" id="IPR012340">
    <property type="entry name" value="NA-bd_OB-fold"/>
</dbReference>
<dbReference type="InterPro" id="IPR004150">
    <property type="entry name" value="NAD_DNA_ligase_OB"/>
</dbReference>
<dbReference type="InterPro" id="IPR010994">
    <property type="entry name" value="RuvA_2-like"/>
</dbReference>
<dbReference type="InterPro" id="IPR004149">
    <property type="entry name" value="Znf_DNAligase_C4"/>
</dbReference>
<dbReference type="NCBIfam" id="TIGR00575">
    <property type="entry name" value="dnlj"/>
    <property type="match status" value="1"/>
</dbReference>
<dbReference type="NCBIfam" id="NF005932">
    <property type="entry name" value="PRK07956.1"/>
    <property type="match status" value="1"/>
</dbReference>
<dbReference type="PANTHER" id="PTHR23389">
    <property type="entry name" value="CHROMOSOME TRANSMISSION FIDELITY FACTOR 18"/>
    <property type="match status" value="1"/>
</dbReference>
<dbReference type="PANTHER" id="PTHR23389:SF9">
    <property type="entry name" value="DNA LIGASE"/>
    <property type="match status" value="1"/>
</dbReference>
<dbReference type="Pfam" id="PF00533">
    <property type="entry name" value="BRCT"/>
    <property type="match status" value="1"/>
</dbReference>
<dbReference type="Pfam" id="PF01653">
    <property type="entry name" value="DNA_ligase_aden"/>
    <property type="match status" value="1"/>
</dbReference>
<dbReference type="Pfam" id="PF03120">
    <property type="entry name" value="DNA_ligase_OB"/>
    <property type="match status" value="1"/>
</dbReference>
<dbReference type="Pfam" id="PF03119">
    <property type="entry name" value="DNA_ligase_ZBD"/>
    <property type="match status" value="1"/>
</dbReference>
<dbReference type="Pfam" id="PF12826">
    <property type="entry name" value="HHH_2"/>
    <property type="match status" value="1"/>
</dbReference>
<dbReference type="Pfam" id="PF14520">
    <property type="entry name" value="HHH_5"/>
    <property type="match status" value="1"/>
</dbReference>
<dbReference type="Pfam" id="PF22745">
    <property type="entry name" value="Nlig-Ia"/>
    <property type="match status" value="1"/>
</dbReference>
<dbReference type="PIRSF" id="PIRSF001604">
    <property type="entry name" value="LigA"/>
    <property type="match status" value="1"/>
</dbReference>
<dbReference type="SMART" id="SM00292">
    <property type="entry name" value="BRCT"/>
    <property type="match status" value="1"/>
</dbReference>
<dbReference type="SMART" id="SM00532">
    <property type="entry name" value="LIGANc"/>
    <property type="match status" value="1"/>
</dbReference>
<dbReference type="SUPFAM" id="SSF52113">
    <property type="entry name" value="BRCT domain"/>
    <property type="match status" value="1"/>
</dbReference>
<dbReference type="SUPFAM" id="SSF56091">
    <property type="entry name" value="DNA ligase/mRNA capping enzyme, catalytic domain"/>
    <property type="match status" value="1"/>
</dbReference>
<dbReference type="SUPFAM" id="SSF50249">
    <property type="entry name" value="Nucleic acid-binding proteins"/>
    <property type="match status" value="1"/>
</dbReference>
<dbReference type="SUPFAM" id="SSF47781">
    <property type="entry name" value="RuvA domain 2-like"/>
    <property type="match status" value="1"/>
</dbReference>
<dbReference type="PROSITE" id="PS50172">
    <property type="entry name" value="BRCT"/>
    <property type="match status" value="1"/>
</dbReference>
<dbReference type="PROSITE" id="PS01055">
    <property type="entry name" value="DNA_LIGASE_N1"/>
    <property type="match status" value="1"/>
</dbReference>
<protein>
    <recommendedName>
        <fullName evidence="1">DNA ligase</fullName>
        <ecNumber evidence="1">6.5.1.2</ecNumber>
    </recommendedName>
    <alternativeName>
        <fullName evidence="1">Polydeoxyribonucleotide synthase [NAD(+)]</fullName>
    </alternativeName>
</protein>
<gene>
    <name evidence="1" type="primary">ligA</name>
    <name type="ordered locus">Smlt3142</name>
</gene>
<comment type="function">
    <text evidence="1">DNA ligase that catalyzes the formation of phosphodiester linkages between 5'-phosphoryl and 3'-hydroxyl groups in double-stranded DNA using NAD as a coenzyme and as the energy source for the reaction. It is essential for DNA replication and repair of damaged DNA.</text>
</comment>
<comment type="catalytic activity">
    <reaction evidence="1">
        <text>NAD(+) + (deoxyribonucleotide)n-3'-hydroxyl + 5'-phospho-(deoxyribonucleotide)m = (deoxyribonucleotide)n+m + AMP + beta-nicotinamide D-nucleotide.</text>
        <dbReference type="EC" id="6.5.1.2"/>
    </reaction>
</comment>
<comment type="cofactor">
    <cofactor evidence="1">
        <name>Mg(2+)</name>
        <dbReference type="ChEBI" id="CHEBI:18420"/>
    </cofactor>
    <cofactor evidence="1">
        <name>Mn(2+)</name>
        <dbReference type="ChEBI" id="CHEBI:29035"/>
    </cofactor>
</comment>
<comment type="similarity">
    <text evidence="1">Belongs to the NAD-dependent DNA ligase family. LigA subfamily.</text>
</comment>
<feature type="chain" id="PRO_0000380478" description="DNA ligase">
    <location>
        <begin position="1"/>
        <end position="821"/>
    </location>
</feature>
<feature type="domain" description="BRCT" evidence="1">
    <location>
        <begin position="741"/>
        <end position="821"/>
    </location>
</feature>
<feature type="active site" description="N6-AMP-lysine intermediate" evidence="1">
    <location>
        <position position="115"/>
    </location>
</feature>
<feature type="binding site" evidence="1">
    <location>
        <begin position="33"/>
        <end position="37"/>
    </location>
    <ligand>
        <name>NAD(+)</name>
        <dbReference type="ChEBI" id="CHEBI:57540"/>
    </ligand>
</feature>
<feature type="binding site" evidence="1">
    <location>
        <begin position="82"/>
        <end position="83"/>
    </location>
    <ligand>
        <name>NAD(+)</name>
        <dbReference type="ChEBI" id="CHEBI:57540"/>
    </ligand>
</feature>
<feature type="binding site" evidence="1">
    <location>
        <position position="113"/>
    </location>
    <ligand>
        <name>NAD(+)</name>
        <dbReference type="ChEBI" id="CHEBI:57540"/>
    </ligand>
</feature>
<feature type="binding site" evidence="1">
    <location>
        <position position="136"/>
    </location>
    <ligand>
        <name>NAD(+)</name>
        <dbReference type="ChEBI" id="CHEBI:57540"/>
    </ligand>
</feature>
<feature type="binding site" evidence="1">
    <location>
        <position position="173"/>
    </location>
    <ligand>
        <name>NAD(+)</name>
        <dbReference type="ChEBI" id="CHEBI:57540"/>
    </ligand>
</feature>
<feature type="binding site" evidence="1">
    <location>
        <position position="290"/>
    </location>
    <ligand>
        <name>NAD(+)</name>
        <dbReference type="ChEBI" id="CHEBI:57540"/>
    </ligand>
</feature>
<feature type="binding site" evidence="1">
    <location>
        <position position="314"/>
    </location>
    <ligand>
        <name>NAD(+)</name>
        <dbReference type="ChEBI" id="CHEBI:57540"/>
    </ligand>
</feature>
<feature type="binding site" evidence="1">
    <location>
        <position position="408"/>
    </location>
    <ligand>
        <name>Zn(2+)</name>
        <dbReference type="ChEBI" id="CHEBI:29105"/>
    </ligand>
</feature>
<feature type="binding site" evidence="1">
    <location>
        <position position="411"/>
    </location>
    <ligand>
        <name>Zn(2+)</name>
        <dbReference type="ChEBI" id="CHEBI:29105"/>
    </ligand>
</feature>
<feature type="binding site" evidence="1">
    <location>
        <position position="426"/>
    </location>
    <ligand>
        <name>Zn(2+)</name>
        <dbReference type="ChEBI" id="CHEBI:29105"/>
    </ligand>
</feature>
<feature type="binding site" evidence="1">
    <location>
        <position position="432"/>
    </location>
    <ligand>
        <name>Zn(2+)</name>
        <dbReference type="ChEBI" id="CHEBI:29105"/>
    </ligand>
</feature>
<reference key="1">
    <citation type="journal article" date="2008" name="Genome Biol.">
        <title>The complete genome, comparative and functional analysis of Stenotrophomonas maltophilia reveals an organism heavily shielded by drug resistance determinants.</title>
        <authorList>
            <person name="Crossman L.C."/>
            <person name="Gould V.C."/>
            <person name="Dow J.M."/>
            <person name="Vernikos G.S."/>
            <person name="Okazaki A."/>
            <person name="Sebaihia M."/>
            <person name="Saunders D."/>
            <person name="Arrowsmith C."/>
            <person name="Carver T."/>
            <person name="Peters N."/>
            <person name="Adlem E."/>
            <person name="Kerhornou A."/>
            <person name="Lord A."/>
            <person name="Murphy L."/>
            <person name="Seeger K."/>
            <person name="Squares R."/>
            <person name="Rutter S."/>
            <person name="Quail M.A."/>
            <person name="Rajandream M.A."/>
            <person name="Harris D."/>
            <person name="Churcher C."/>
            <person name="Bentley S.D."/>
            <person name="Parkhill J."/>
            <person name="Thomson N.R."/>
            <person name="Avison M.B."/>
        </authorList>
    </citation>
    <scope>NUCLEOTIDE SEQUENCE [LARGE SCALE GENOMIC DNA]</scope>
    <source>
        <strain>K279a</strain>
    </source>
</reference>